<reference key="1">
    <citation type="journal article" date="2006" name="Genome Res.">
        <title>Alu-mediated 100-kb deletion in the primate genome: the loss of the agouti signaling protein gene in the lesser apes.</title>
        <authorList>
            <person name="Nakayama K."/>
            <person name="Ishida T."/>
        </authorList>
    </citation>
    <scope>NUCLEOTIDE SEQUENCE [GENOMIC DNA]</scope>
</reference>
<dbReference type="EMBL" id="AB236871">
    <property type="protein sequence ID" value="BAE93019.1"/>
    <property type="molecule type" value="Genomic_DNA"/>
</dbReference>
<dbReference type="FunCoup" id="Q1XGV5">
    <property type="interactions" value="240"/>
</dbReference>
<dbReference type="STRING" id="9593.ENSGGOP00000026258"/>
<dbReference type="GlyCosmos" id="Q1XGV5">
    <property type="glycosylation" value="1 site, No reported glycans"/>
</dbReference>
<dbReference type="eggNOG" id="ENOG502S5XF">
    <property type="taxonomic scope" value="Eukaryota"/>
</dbReference>
<dbReference type="InParanoid" id="Q1XGV5"/>
<dbReference type="Proteomes" id="UP000001519">
    <property type="component" value="Unplaced"/>
</dbReference>
<dbReference type="GO" id="GO:0005615">
    <property type="term" value="C:extracellular space"/>
    <property type="evidence" value="ECO:0000250"/>
    <property type="project" value="UniProtKB"/>
</dbReference>
<dbReference type="GO" id="GO:0031779">
    <property type="term" value="F:melanocortin receptor binding"/>
    <property type="evidence" value="ECO:0000318"/>
    <property type="project" value="GO_Central"/>
</dbReference>
<dbReference type="GO" id="GO:0005184">
    <property type="term" value="F:neuropeptide hormone activity"/>
    <property type="evidence" value="ECO:0000318"/>
    <property type="project" value="GO_Central"/>
</dbReference>
<dbReference type="GO" id="GO:0009755">
    <property type="term" value="P:hormone-mediated signaling pathway"/>
    <property type="evidence" value="ECO:0007669"/>
    <property type="project" value="InterPro"/>
</dbReference>
<dbReference type="GO" id="GO:0042438">
    <property type="term" value="P:melanin biosynthetic process"/>
    <property type="evidence" value="ECO:0000250"/>
    <property type="project" value="UniProtKB"/>
</dbReference>
<dbReference type="GO" id="GO:0032438">
    <property type="term" value="P:melanosome organization"/>
    <property type="evidence" value="ECO:0000318"/>
    <property type="project" value="GO_Central"/>
</dbReference>
<dbReference type="FunFam" id="4.10.760.10:FF:000002">
    <property type="entry name" value="Agouti-signaling protein"/>
    <property type="match status" value="1"/>
</dbReference>
<dbReference type="Gene3D" id="4.10.760.10">
    <property type="entry name" value="Agouti domain"/>
    <property type="match status" value="1"/>
</dbReference>
<dbReference type="InterPro" id="IPR007733">
    <property type="entry name" value="Agouti"/>
</dbReference>
<dbReference type="InterPro" id="IPR027300">
    <property type="entry name" value="Agouti_dom"/>
</dbReference>
<dbReference type="InterPro" id="IPR036836">
    <property type="entry name" value="Agouti_dom_sf"/>
</dbReference>
<dbReference type="PANTHER" id="PTHR16551">
    <property type="entry name" value="AGOUTI RELATED"/>
    <property type="match status" value="1"/>
</dbReference>
<dbReference type="PANTHER" id="PTHR16551:SF1">
    <property type="entry name" value="AGOUTI-SIGNALING PROTEIN"/>
    <property type="match status" value="1"/>
</dbReference>
<dbReference type="Pfam" id="PF05039">
    <property type="entry name" value="Agouti"/>
    <property type="match status" value="1"/>
</dbReference>
<dbReference type="SMART" id="SM00792">
    <property type="entry name" value="Agouti"/>
    <property type="match status" value="1"/>
</dbReference>
<dbReference type="SUPFAM" id="SSF57055">
    <property type="entry name" value="Agouti-related protein"/>
    <property type="match status" value="1"/>
</dbReference>
<dbReference type="PROSITE" id="PS60024">
    <property type="entry name" value="AGOUTI_1"/>
    <property type="match status" value="1"/>
</dbReference>
<dbReference type="PROSITE" id="PS51150">
    <property type="entry name" value="AGOUTI_2"/>
    <property type="match status" value="1"/>
</dbReference>
<evidence type="ECO:0000250" key="1"/>
<evidence type="ECO:0000250" key="2">
    <source>
        <dbReference type="UniProtKB" id="P42127"/>
    </source>
</evidence>
<evidence type="ECO:0000250" key="3">
    <source>
        <dbReference type="UniProtKB" id="Q03288"/>
    </source>
</evidence>
<evidence type="ECO:0000255" key="4"/>
<evidence type="ECO:0000255" key="5">
    <source>
        <dbReference type="PROSITE-ProRule" id="PRU00494"/>
    </source>
</evidence>
<evidence type="ECO:0000256" key="6">
    <source>
        <dbReference type="SAM" id="MobiDB-lite"/>
    </source>
</evidence>
<feature type="signal peptide" evidence="4">
    <location>
        <begin position="1"/>
        <end position="22"/>
    </location>
</feature>
<feature type="chain" id="PRO_0000235198" description="Agouti-signaling protein">
    <location>
        <begin position="23"/>
        <end position="132"/>
    </location>
</feature>
<feature type="domain" description="Agouti" evidence="5">
    <location>
        <begin position="93"/>
        <end position="132"/>
    </location>
</feature>
<feature type="region of interest" description="Disordered" evidence="6">
    <location>
        <begin position="61"/>
        <end position="87"/>
    </location>
</feature>
<feature type="compositionally biased region" description="Basic and acidic residues" evidence="6">
    <location>
        <begin position="63"/>
        <end position="79"/>
    </location>
</feature>
<feature type="glycosylation site" description="N-linked (GlcNAc...) asparagine" evidence="4">
    <location>
        <position position="39"/>
    </location>
</feature>
<feature type="disulfide bond" evidence="5">
    <location>
        <begin position="93"/>
        <end position="108"/>
    </location>
</feature>
<feature type="disulfide bond" evidence="5">
    <location>
        <begin position="100"/>
        <end position="114"/>
    </location>
</feature>
<feature type="disulfide bond" evidence="5">
    <location>
        <begin position="107"/>
        <end position="125"/>
    </location>
</feature>
<feature type="disulfide bond" evidence="5">
    <location>
        <begin position="111"/>
        <end position="132"/>
    </location>
</feature>
<feature type="disulfide bond" evidence="5">
    <location>
        <begin position="116"/>
        <end position="123"/>
    </location>
</feature>
<protein>
    <recommendedName>
        <fullName>Agouti-signaling protein</fullName>
        <shortName>ASP</shortName>
    </recommendedName>
    <alternativeName>
        <fullName>Agouti switch protein</fullName>
    </alternativeName>
</protein>
<accession>Q1XGV5</accession>
<keyword id="KW-1015">Disulfide bond</keyword>
<keyword id="KW-0325">Glycoprotein</keyword>
<keyword id="KW-0960">Knottin</keyword>
<keyword id="KW-1185">Reference proteome</keyword>
<keyword id="KW-0964">Secreted</keyword>
<keyword id="KW-0732">Signal</keyword>
<sequence length="132" mass="14593">MDVTRLLLATLLVFLCFFTANSHLPPEEKLRDDRSLRSNSSVNLLDFPSVSIVALNKKSKQIGRKEAEKKRSSKKEASMKKVARPRTPLSAPCVATRNSCKPPAPACCDPCASCQCRFFRSACSCRVLSLNC</sequence>
<name>ASIP_GORGO</name>
<organism>
    <name type="scientific">Gorilla gorilla gorilla</name>
    <name type="common">Western lowland gorilla</name>
    <dbReference type="NCBI Taxonomy" id="9595"/>
    <lineage>
        <taxon>Eukaryota</taxon>
        <taxon>Metazoa</taxon>
        <taxon>Chordata</taxon>
        <taxon>Craniata</taxon>
        <taxon>Vertebrata</taxon>
        <taxon>Euteleostomi</taxon>
        <taxon>Mammalia</taxon>
        <taxon>Eutheria</taxon>
        <taxon>Euarchontoglires</taxon>
        <taxon>Primates</taxon>
        <taxon>Haplorrhini</taxon>
        <taxon>Catarrhini</taxon>
        <taxon>Hominidae</taxon>
        <taxon>Gorilla</taxon>
    </lineage>
</organism>
<gene>
    <name type="primary">ASIP</name>
</gene>
<proteinExistence type="inferred from homology"/>
<comment type="function">
    <text evidence="3">Involved in the regulation of melanogenesis. The binding of ASP to MC1R precludes alpha-MSH initiated signaling and thus blocks production of cAMP, leading to a down-regulation of eumelanogenesis (brown/black pigment) and thus increasing synthesis of pheomelanin (yellow/red pigment) (By similarity).</text>
</comment>
<comment type="subcellular location">
    <subcellularLocation>
        <location evidence="2">Secreted</location>
    </subcellularLocation>
</comment>
<comment type="domain">
    <text evidence="1">The presence of a 'disulfide through disulfide knot' structurally defines this protein as a knottin.</text>
</comment>